<organism>
    <name type="scientific">Homo sapiens</name>
    <name type="common">Human</name>
    <dbReference type="NCBI Taxonomy" id="9606"/>
    <lineage>
        <taxon>Eukaryota</taxon>
        <taxon>Metazoa</taxon>
        <taxon>Chordata</taxon>
        <taxon>Craniata</taxon>
        <taxon>Vertebrata</taxon>
        <taxon>Euteleostomi</taxon>
        <taxon>Mammalia</taxon>
        <taxon>Eutheria</taxon>
        <taxon>Euarchontoglires</taxon>
        <taxon>Primates</taxon>
        <taxon>Haplorrhini</taxon>
        <taxon>Catarrhini</taxon>
        <taxon>Hominidae</taxon>
        <taxon>Homo</taxon>
    </lineage>
</organism>
<proteinExistence type="evidence at protein level"/>
<keyword id="KW-0002">3D-structure</keyword>
<keyword id="KW-0025">Alternative splicing</keyword>
<keyword id="KW-0067">ATP-binding</keyword>
<keyword id="KW-0418">Kinase</keyword>
<keyword id="KW-0496">Mitochondrion</keyword>
<keyword id="KW-0547">Nucleotide-binding</keyword>
<keyword id="KW-0597">Phosphoprotein</keyword>
<keyword id="KW-1267">Proteomics identification</keyword>
<keyword id="KW-1185">Reference proteome</keyword>
<keyword id="KW-0808">Transferase</keyword>
<keyword id="KW-0809">Transit peptide</keyword>
<sequence length="407" mass="46154">MRWVWALLKNASLAGAPKYIEHFSKFSPSPLSMKQFLDFGSSNACEKTSFTFLRQELPVRLANIMKEINLLPDRVLSTPSVQLVQSWYVQSLLDIMEFLDKDPEDHRTLSQFTDALVTIRNRHNDVVPTMAQGVLEYKDTYGDDPVSNQNIQYFLDRFYLSRISIRMLINQHTLIFDGSTNPAHPKHIGSIDPNCNVSEVVKDAYDMAKLLCDKYYMASPDLEIQEINAANSKQPIHMVYVPSHLYHMLFELFKNAMRATVESHESSLILPPIKVMVALGEEDLSIKMSDRGGGVPLRKIERLFSYMYSTAPTPQPGTGGTPLAGFGYGLPISRLYAKYFQGDLQLFSMEGFGTDAVIYLKALSTDSVERLPVYNKSAWRHYQTIQEAGDWCVPSTEPKNTSTYRVS</sequence>
<evidence type="ECO:0000250" key="1"/>
<evidence type="ECO:0000250" key="2">
    <source>
        <dbReference type="UniProtKB" id="Q15118"/>
    </source>
</evidence>
<evidence type="ECO:0000250" key="3">
    <source>
        <dbReference type="UniProtKB" id="Q8BFP9"/>
    </source>
</evidence>
<evidence type="ECO:0000255" key="4"/>
<evidence type="ECO:0000255" key="5">
    <source>
        <dbReference type="PROSITE-ProRule" id="PRU00107"/>
    </source>
</evidence>
<evidence type="ECO:0000269" key="6">
    <source>
    </source>
</evidence>
<evidence type="ECO:0000269" key="7">
    <source>
    </source>
</evidence>
<evidence type="ECO:0000269" key="8">
    <source>
    </source>
</evidence>
<evidence type="ECO:0000269" key="9">
    <source>
    </source>
</evidence>
<evidence type="ECO:0000269" key="10">
    <source>
    </source>
</evidence>
<evidence type="ECO:0000269" key="11">
    <source>
    </source>
</evidence>
<evidence type="ECO:0000269" key="12">
    <source>
    </source>
</evidence>
<evidence type="ECO:0000269" key="13">
    <source>
    </source>
</evidence>
<evidence type="ECO:0000269" key="14">
    <source>
    </source>
</evidence>
<evidence type="ECO:0000269" key="15">
    <source>
    </source>
</evidence>
<evidence type="ECO:0000269" key="16">
    <source>
    </source>
</evidence>
<evidence type="ECO:0000269" key="17">
    <source>
    </source>
</evidence>
<evidence type="ECO:0000269" key="18">
    <source>
    </source>
</evidence>
<evidence type="ECO:0000303" key="19">
    <source>
    </source>
</evidence>
<evidence type="ECO:0000305" key="20"/>
<evidence type="ECO:0007829" key="21">
    <source>
        <dbReference type="PDB" id="2BU8"/>
    </source>
</evidence>
<evidence type="ECO:0007829" key="22">
    <source>
        <dbReference type="PDB" id="4MPC"/>
    </source>
</evidence>
<evidence type="ECO:0007829" key="23">
    <source>
        <dbReference type="PDB" id="4V26"/>
    </source>
</evidence>
<evidence type="ECO:0007829" key="24">
    <source>
        <dbReference type="PDB" id="5J6A"/>
    </source>
</evidence>
<evidence type="ECO:0007829" key="25">
    <source>
        <dbReference type="PDB" id="5J71"/>
    </source>
</evidence>
<evidence type="ECO:0007829" key="26">
    <source>
        <dbReference type="PDB" id="5M4K"/>
    </source>
</evidence>
<evidence type="ECO:0007829" key="27">
    <source>
        <dbReference type="PDB" id="5M4P"/>
    </source>
</evidence>
<evidence type="ECO:0007829" key="28">
    <source>
        <dbReference type="PDB" id="6LIL"/>
    </source>
</evidence>
<evidence type="ECO:0007829" key="29">
    <source>
        <dbReference type="PDB" id="6LIN"/>
    </source>
</evidence>
<evidence type="ECO:0007829" key="30">
    <source>
        <dbReference type="PDB" id="6LIO"/>
    </source>
</evidence>
<evidence type="ECO:0007829" key="31">
    <source>
        <dbReference type="PDB" id="7VBU"/>
    </source>
</evidence>
<dbReference type="EC" id="2.7.11.2"/>
<dbReference type="EMBL" id="L42451">
    <property type="protein sequence ID" value="AAC42010.1"/>
    <property type="molecule type" value="mRNA"/>
</dbReference>
<dbReference type="EMBL" id="AK055119">
    <property type="protein sequence ID" value="BAG51472.1"/>
    <property type="molecule type" value="mRNA"/>
</dbReference>
<dbReference type="EMBL" id="AK290522">
    <property type="protein sequence ID" value="BAF83211.1"/>
    <property type="molecule type" value="mRNA"/>
</dbReference>
<dbReference type="EMBL" id="AC002401">
    <property type="status" value="NOT_ANNOTATED_CDS"/>
    <property type="molecule type" value="Genomic_DNA"/>
</dbReference>
<dbReference type="EMBL" id="CH471109">
    <property type="protein sequence ID" value="EAW94642.1"/>
    <property type="molecule type" value="Genomic_DNA"/>
</dbReference>
<dbReference type="EMBL" id="CH471109">
    <property type="protein sequence ID" value="EAW94644.1"/>
    <property type="molecule type" value="Genomic_DNA"/>
</dbReference>
<dbReference type="EMBL" id="BC005811">
    <property type="protein sequence ID" value="AAH05811.1"/>
    <property type="molecule type" value="mRNA"/>
</dbReference>
<dbReference type="EMBL" id="BC040478">
    <property type="protein sequence ID" value="AAH40478.1"/>
    <property type="molecule type" value="mRNA"/>
</dbReference>
<dbReference type="EMBL" id="BC063137">
    <property type="protein sequence ID" value="AAH63137.1"/>
    <property type="molecule type" value="mRNA"/>
</dbReference>
<dbReference type="CCDS" id="CCDS11559.1">
    <molecule id="Q15119-1"/>
</dbReference>
<dbReference type="CCDS" id="CCDS56039.1">
    <molecule id="Q15119-2"/>
</dbReference>
<dbReference type="PIR" id="I70159">
    <property type="entry name" value="I70159"/>
</dbReference>
<dbReference type="RefSeq" id="NP_001186827.1">
    <molecule id="Q15119-2"/>
    <property type="nucleotide sequence ID" value="NM_001199898.2"/>
</dbReference>
<dbReference type="RefSeq" id="NP_001186828.1">
    <molecule id="Q15119-2"/>
    <property type="nucleotide sequence ID" value="NM_001199899.2"/>
</dbReference>
<dbReference type="RefSeq" id="NP_002602.2">
    <molecule id="Q15119-1"/>
    <property type="nucleotide sequence ID" value="NM_002611.4"/>
</dbReference>
<dbReference type="PDB" id="2BTZ">
    <property type="method" value="X-ray"/>
    <property type="resolution" value="2.20 A"/>
    <property type="chains" value="A=16-407"/>
</dbReference>
<dbReference type="PDB" id="2BU2">
    <property type="method" value="X-ray"/>
    <property type="resolution" value="2.40 A"/>
    <property type="chains" value="A=16-407"/>
</dbReference>
<dbReference type="PDB" id="2BU5">
    <property type="method" value="X-ray"/>
    <property type="resolution" value="2.35 A"/>
    <property type="chains" value="A=16-407"/>
</dbReference>
<dbReference type="PDB" id="2BU6">
    <property type="method" value="X-ray"/>
    <property type="resolution" value="2.40 A"/>
    <property type="chains" value="A=16-407"/>
</dbReference>
<dbReference type="PDB" id="2BU7">
    <property type="method" value="X-ray"/>
    <property type="resolution" value="2.40 A"/>
    <property type="chains" value="A=16-407"/>
</dbReference>
<dbReference type="PDB" id="2BU8">
    <property type="method" value="X-ray"/>
    <property type="resolution" value="2.50 A"/>
    <property type="chains" value="A=16-407"/>
</dbReference>
<dbReference type="PDB" id="4MP2">
    <property type="method" value="X-ray"/>
    <property type="resolution" value="1.75 A"/>
    <property type="chains" value="A=9-407"/>
</dbReference>
<dbReference type="PDB" id="4MP7">
    <property type="method" value="X-ray"/>
    <property type="resolution" value="1.80 A"/>
    <property type="chains" value="A=9-407"/>
</dbReference>
<dbReference type="PDB" id="4MPC">
    <property type="method" value="X-ray"/>
    <property type="resolution" value="1.70 A"/>
    <property type="chains" value="A=9-407"/>
</dbReference>
<dbReference type="PDB" id="4MPE">
    <property type="method" value="X-ray"/>
    <property type="resolution" value="1.95 A"/>
    <property type="chains" value="A=9-407"/>
</dbReference>
<dbReference type="PDB" id="4MPN">
    <property type="method" value="X-ray"/>
    <property type="resolution" value="1.75 A"/>
    <property type="chains" value="A=9-407"/>
</dbReference>
<dbReference type="PDB" id="4V25">
    <property type="method" value="X-ray"/>
    <property type="resolution" value="2.60 A"/>
    <property type="chains" value="A=1-407"/>
</dbReference>
<dbReference type="PDB" id="4V26">
    <property type="method" value="X-ray"/>
    <property type="resolution" value="2.49 A"/>
    <property type="chains" value="A=1-407"/>
</dbReference>
<dbReference type="PDB" id="5J6A">
    <property type="method" value="X-ray"/>
    <property type="resolution" value="2.04 A"/>
    <property type="chains" value="A=9-407"/>
</dbReference>
<dbReference type="PDB" id="5J71">
    <property type="method" value="X-ray"/>
    <property type="resolution" value="1.65 A"/>
    <property type="chains" value="A=9-407"/>
</dbReference>
<dbReference type="PDB" id="5M4K">
    <property type="method" value="X-ray"/>
    <property type="resolution" value="2.60 A"/>
    <property type="chains" value="A=1-407"/>
</dbReference>
<dbReference type="PDB" id="5M4M">
    <property type="method" value="X-ray"/>
    <property type="resolution" value="2.40 A"/>
    <property type="chains" value="A=1-407"/>
</dbReference>
<dbReference type="PDB" id="5M4N">
    <property type="method" value="X-ray"/>
    <property type="resolution" value="2.60 A"/>
    <property type="chains" value="A=1-407"/>
</dbReference>
<dbReference type="PDB" id="5M4P">
    <property type="method" value="X-ray"/>
    <property type="resolution" value="2.30 A"/>
    <property type="chains" value="A=1-407"/>
</dbReference>
<dbReference type="PDB" id="6LIL">
    <property type="method" value="X-ray"/>
    <property type="resolution" value="1.93 A"/>
    <property type="chains" value="A/B=6-386"/>
</dbReference>
<dbReference type="PDB" id="6LIN">
    <property type="method" value="X-ray"/>
    <property type="resolution" value="2.67 A"/>
    <property type="chains" value="A/B/C/D=6-386"/>
</dbReference>
<dbReference type="PDB" id="6LIO">
    <property type="method" value="X-ray"/>
    <property type="resolution" value="1.76 A"/>
    <property type="chains" value="A/B=6-386"/>
</dbReference>
<dbReference type="PDB" id="6TMP">
    <property type="method" value="X-ray"/>
    <property type="resolution" value="2.08 A"/>
    <property type="chains" value="AAA=14-407"/>
</dbReference>
<dbReference type="PDB" id="6TMQ">
    <property type="method" value="X-ray"/>
    <property type="resolution" value="2.11 A"/>
    <property type="chains" value="AAA=14-407"/>
</dbReference>
<dbReference type="PDB" id="6TMZ">
    <property type="method" value="X-ray"/>
    <property type="resolution" value="2.71 A"/>
    <property type="chains" value="AAA=14-407"/>
</dbReference>
<dbReference type="PDB" id="6TN0">
    <property type="method" value="X-ray"/>
    <property type="resolution" value="1.91 A"/>
    <property type="chains" value="AAA=14-407"/>
</dbReference>
<dbReference type="PDB" id="6TN2">
    <property type="method" value="X-ray"/>
    <property type="resolution" value="1.77 A"/>
    <property type="chains" value="AAA=14-407"/>
</dbReference>
<dbReference type="PDB" id="7EA0">
    <property type="method" value="X-ray"/>
    <property type="resolution" value="2.34 A"/>
    <property type="chains" value="A=16-407"/>
</dbReference>
<dbReference type="PDB" id="7EAS">
    <property type="method" value="X-ray"/>
    <property type="resolution" value="1.97 A"/>
    <property type="chains" value="A=16-407"/>
</dbReference>
<dbReference type="PDB" id="7EBH">
    <property type="method" value="X-ray"/>
    <property type="resolution" value="1.96 A"/>
    <property type="chains" value="A=16-407"/>
</dbReference>
<dbReference type="PDB" id="7VBU">
    <property type="method" value="X-ray"/>
    <property type="resolution" value="1.89 A"/>
    <property type="chains" value="A=16-407"/>
</dbReference>
<dbReference type="PDB" id="7VBV">
    <property type="method" value="X-ray"/>
    <property type="resolution" value="2.21 A"/>
    <property type="chains" value="A/B=16-407"/>
</dbReference>
<dbReference type="PDB" id="7VBX">
    <property type="method" value="X-ray"/>
    <property type="resolution" value="2.60 A"/>
    <property type="chains" value="A=16-407"/>
</dbReference>
<dbReference type="PDB" id="8ZM1">
    <property type="method" value="X-ray"/>
    <property type="resolution" value="2.35 A"/>
    <property type="chains" value="A=16-407"/>
</dbReference>
<dbReference type="PDB" id="8ZM2">
    <property type="method" value="X-ray"/>
    <property type="resolution" value="2.34 A"/>
    <property type="chains" value="A=16-407"/>
</dbReference>
<dbReference type="PDBsum" id="2BTZ"/>
<dbReference type="PDBsum" id="2BU2"/>
<dbReference type="PDBsum" id="2BU5"/>
<dbReference type="PDBsum" id="2BU6"/>
<dbReference type="PDBsum" id="2BU7"/>
<dbReference type="PDBsum" id="2BU8"/>
<dbReference type="PDBsum" id="4MP2"/>
<dbReference type="PDBsum" id="4MP7"/>
<dbReference type="PDBsum" id="4MPC"/>
<dbReference type="PDBsum" id="4MPE"/>
<dbReference type="PDBsum" id="4MPN"/>
<dbReference type="PDBsum" id="4V25"/>
<dbReference type="PDBsum" id="4V26"/>
<dbReference type="PDBsum" id="5J6A"/>
<dbReference type="PDBsum" id="5J71"/>
<dbReference type="PDBsum" id="5M4K"/>
<dbReference type="PDBsum" id="5M4M"/>
<dbReference type="PDBsum" id="5M4N"/>
<dbReference type="PDBsum" id="5M4P"/>
<dbReference type="PDBsum" id="6LIL"/>
<dbReference type="PDBsum" id="6LIN"/>
<dbReference type="PDBsum" id="6LIO"/>
<dbReference type="PDBsum" id="6TMP"/>
<dbReference type="PDBsum" id="6TMQ"/>
<dbReference type="PDBsum" id="6TMZ"/>
<dbReference type="PDBsum" id="6TN0"/>
<dbReference type="PDBsum" id="6TN2"/>
<dbReference type="PDBsum" id="7EA0"/>
<dbReference type="PDBsum" id="7EAS"/>
<dbReference type="PDBsum" id="7EBH"/>
<dbReference type="PDBsum" id="7VBU"/>
<dbReference type="PDBsum" id="7VBV"/>
<dbReference type="PDBsum" id="7VBX"/>
<dbReference type="PDBsum" id="8ZM1"/>
<dbReference type="PDBsum" id="8ZM2"/>
<dbReference type="SMR" id="Q15119"/>
<dbReference type="BioGRID" id="111190">
    <property type="interactions" value="37"/>
</dbReference>
<dbReference type="FunCoup" id="Q15119">
    <property type="interactions" value="1969"/>
</dbReference>
<dbReference type="IntAct" id="Q15119">
    <property type="interactions" value="31"/>
</dbReference>
<dbReference type="MINT" id="Q15119"/>
<dbReference type="STRING" id="9606.ENSP00000420927"/>
<dbReference type="BindingDB" id="Q15119"/>
<dbReference type="ChEMBL" id="CHEMBL3861"/>
<dbReference type="DrugBank" id="DB08609">
    <property type="generic name" value="(2R)-N-{4-[Ethyl(phenyl)sulfamoyl]-2-methylphenyl}-3,3,3-trifluoro-2-hydroxy-2-methylpropanamide"/>
</dbReference>
<dbReference type="DrugBank" id="DB08608">
    <property type="generic name" value="4-({(2R,5S)-2,5-DIMETHYL-4-[(2R)-3,3,3-TRIFLUORO-2-HYDROXY-2-METHYLPROPANOYL]PIPERAZIN-1-YL}CARBONYL)BENZONITRILE"/>
</dbReference>
<dbReference type="DrugBank" id="DB08610">
    <property type="generic name" value="N-(2-AMINOETHYL)-2-{3-CHLORO-4-[(4-ISOPROPYLBENZYL)OXY]PHENYL} ACETAMIDE"/>
</dbReference>
<dbReference type="DrugCentral" id="Q15119"/>
<dbReference type="GuidetoPHARMACOLOGY" id="2142"/>
<dbReference type="GlyGen" id="Q15119">
    <property type="glycosylation" value="1 site, 1 O-linked glycan (1 site)"/>
</dbReference>
<dbReference type="iPTMnet" id="Q15119"/>
<dbReference type="PhosphoSitePlus" id="Q15119"/>
<dbReference type="BioMuta" id="PDK2"/>
<dbReference type="DMDM" id="21431820"/>
<dbReference type="jPOST" id="Q15119"/>
<dbReference type="MassIVE" id="Q15119"/>
<dbReference type="PaxDb" id="9606-ENSP00000420927"/>
<dbReference type="PeptideAtlas" id="Q15119"/>
<dbReference type="ProteomicsDB" id="60445">
    <molecule id="Q15119-1"/>
</dbReference>
<dbReference type="ProteomicsDB" id="60446">
    <molecule id="Q15119-2"/>
</dbReference>
<dbReference type="Pumba" id="Q15119"/>
<dbReference type="Antibodypedia" id="1630">
    <property type="antibodies" value="537 antibodies from 35 providers"/>
</dbReference>
<dbReference type="DNASU" id="5164"/>
<dbReference type="Ensembl" id="ENST00000007708.7">
    <molecule id="Q15119-2"/>
    <property type="protein sequence ID" value="ENSP00000007708.3"/>
    <property type="gene ID" value="ENSG00000005882.12"/>
</dbReference>
<dbReference type="Ensembl" id="ENST00000503176.6">
    <molecule id="Q15119-1"/>
    <property type="protein sequence ID" value="ENSP00000420927.1"/>
    <property type="gene ID" value="ENSG00000005882.12"/>
</dbReference>
<dbReference type="Ensembl" id="ENST00000614357.4">
    <molecule id="Q15119-2"/>
    <property type="protein sequence ID" value="ENSP00000481915.1"/>
    <property type="gene ID" value="ENSG00000005882.12"/>
</dbReference>
<dbReference type="GeneID" id="5164"/>
<dbReference type="KEGG" id="hsa:5164"/>
<dbReference type="MANE-Select" id="ENST00000503176.6">
    <property type="protein sequence ID" value="ENSP00000420927.1"/>
    <property type="RefSeq nucleotide sequence ID" value="NM_002611.5"/>
    <property type="RefSeq protein sequence ID" value="NP_002602.2"/>
</dbReference>
<dbReference type="UCSC" id="uc002iqb.4">
    <molecule id="Q15119-1"/>
    <property type="organism name" value="human"/>
</dbReference>
<dbReference type="AGR" id="HGNC:8810"/>
<dbReference type="CTD" id="5164"/>
<dbReference type="DisGeNET" id="5164"/>
<dbReference type="GeneCards" id="PDK2"/>
<dbReference type="HGNC" id="HGNC:8810">
    <property type="gene designation" value="PDK2"/>
</dbReference>
<dbReference type="HPA" id="ENSG00000005882">
    <property type="expression patterns" value="Tissue enhanced (skeletal muscle, tongue)"/>
</dbReference>
<dbReference type="MalaCards" id="PDK2"/>
<dbReference type="MIM" id="602525">
    <property type="type" value="gene"/>
</dbReference>
<dbReference type="neXtProt" id="NX_Q15119"/>
<dbReference type="OpenTargets" id="ENSG00000005882"/>
<dbReference type="PharmGKB" id="PA33155"/>
<dbReference type="VEuPathDB" id="HostDB:ENSG00000005882"/>
<dbReference type="eggNOG" id="KOG0787">
    <property type="taxonomic scope" value="Eukaryota"/>
</dbReference>
<dbReference type="GeneTree" id="ENSGT01030000234646"/>
<dbReference type="HOGENOM" id="CLU_023861_1_1_1"/>
<dbReference type="InParanoid" id="Q15119"/>
<dbReference type="OMA" id="DMSRNAP"/>
<dbReference type="OrthoDB" id="241648at2759"/>
<dbReference type="PAN-GO" id="Q15119">
    <property type="GO annotations" value="4 GO annotations based on evolutionary models"/>
</dbReference>
<dbReference type="PhylomeDB" id="Q15119"/>
<dbReference type="TreeFam" id="TF314918"/>
<dbReference type="BRENDA" id="2.7.11.2">
    <property type="organism ID" value="2681"/>
</dbReference>
<dbReference type="PathwayCommons" id="Q15119"/>
<dbReference type="Reactome" id="R-HSA-204174">
    <property type="pathway name" value="Regulation of pyruvate dehydrogenase (PDH) complex"/>
</dbReference>
<dbReference type="Reactome" id="R-HSA-5362517">
    <property type="pathway name" value="Signaling by Retinoic Acid"/>
</dbReference>
<dbReference type="SignaLink" id="Q15119"/>
<dbReference type="SIGNOR" id="Q15119"/>
<dbReference type="BioGRID-ORCS" id="5164">
    <property type="hits" value="61 hits in 1188 CRISPR screens"/>
</dbReference>
<dbReference type="ChiTaRS" id="PDK2">
    <property type="organism name" value="human"/>
</dbReference>
<dbReference type="EvolutionaryTrace" id="Q15119"/>
<dbReference type="GeneWiki" id="PDK2"/>
<dbReference type="GenomeRNAi" id="5164"/>
<dbReference type="Pharos" id="Q15119">
    <property type="development level" value="Tchem"/>
</dbReference>
<dbReference type="PRO" id="PR:Q15119"/>
<dbReference type="Proteomes" id="UP000005640">
    <property type="component" value="Chromosome 17"/>
</dbReference>
<dbReference type="RNAct" id="Q15119">
    <property type="molecule type" value="protein"/>
</dbReference>
<dbReference type="Bgee" id="ENSG00000005882">
    <property type="expression patterns" value="Expressed in hindlimb stylopod muscle and 189 other cell types or tissues"/>
</dbReference>
<dbReference type="ExpressionAtlas" id="Q15119">
    <property type="expression patterns" value="baseline and differential"/>
</dbReference>
<dbReference type="GO" id="GO:0005829">
    <property type="term" value="C:cytosol"/>
    <property type="evidence" value="ECO:0000314"/>
    <property type="project" value="HPA"/>
</dbReference>
<dbReference type="GO" id="GO:0005759">
    <property type="term" value="C:mitochondrial matrix"/>
    <property type="evidence" value="ECO:0000304"/>
    <property type="project" value="Reactome"/>
</dbReference>
<dbReference type="GO" id="GO:0005739">
    <property type="term" value="C:mitochondrion"/>
    <property type="evidence" value="ECO:0000314"/>
    <property type="project" value="HPA"/>
</dbReference>
<dbReference type="GO" id="GO:0005654">
    <property type="term" value="C:nucleoplasm"/>
    <property type="evidence" value="ECO:0000314"/>
    <property type="project" value="HPA"/>
</dbReference>
<dbReference type="GO" id="GO:0045254">
    <property type="term" value="C:pyruvate dehydrogenase complex"/>
    <property type="evidence" value="ECO:0000250"/>
    <property type="project" value="UniProtKB"/>
</dbReference>
<dbReference type="GO" id="GO:0005524">
    <property type="term" value="F:ATP binding"/>
    <property type="evidence" value="ECO:0000314"/>
    <property type="project" value="UniProtKB"/>
</dbReference>
<dbReference type="GO" id="GO:0042803">
    <property type="term" value="F:protein homodimerization activity"/>
    <property type="evidence" value="ECO:0000353"/>
    <property type="project" value="UniProtKB"/>
</dbReference>
<dbReference type="GO" id="GO:0004672">
    <property type="term" value="F:protein kinase activity"/>
    <property type="evidence" value="ECO:0000304"/>
    <property type="project" value="ProtInc"/>
</dbReference>
<dbReference type="GO" id="GO:0004740">
    <property type="term" value="F:pyruvate dehydrogenase (acetyl-transferring) kinase activity"/>
    <property type="evidence" value="ECO:0000314"/>
    <property type="project" value="UniProtKB"/>
</dbReference>
<dbReference type="GO" id="GO:0031670">
    <property type="term" value="P:cellular response to nutrient"/>
    <property type="evidence" value="ECO:0000250"/>
    <property type="project" value="UniProtKB"/>
</dbReference>
<dbReference type="GO" id="GO:0034614">
    <property type="term" value="P:cellular response to reactive oxygen species"/>
    <property type="evidence" value="ECO:0000315"/>
    <property type="project" value="UniProtKB"/>
</dbReference>
<dbReference type="GO" id="GO:0042593">
    <property type="term" value="P:glucose homeostasis"/>
    <property type="evidence" value="ECO:0000250"/>
    <property type="project" value="UniProtKB"/>
</dbReference>
<dbReference type="GO" id="GO:0006006">
    <property type="term" value="P:glucose metabolic process"/>
    <property type="evidence" value="ECO:0000304"/>
    <property type="project" value="ProtInc"/>
</dbReference>
<dbReference type="GO" id="GO:0008286">
    <property type="term" value="P:insulin receptor signaling pathway"/>
    <property type="evidence" value="ECO:0000250"/>
    <property type="project" value="UniProtKB"/>
</dbReference>
<dbReference type="GO" id="GO:0072332">
    <property type="term" value="P:intrinsic apoptotic signaling pathway by p53 class mediator"/>
    <property type="evidence" value="ECO:0000315"/>
    <property type="project" value="UniProtKB"/>
</dbReference>
<dbReference type="GO" id="GO:0010510">
    <property type="term" value="P:regulation of acetyl-CoA biosynthetic process from pyruvate"/>
    <property type="evidence" value="ECO:0000250"/>
    <property type="project" value="UniProtKB"/>
</dbReference>
<dbReference type="GO" id="GO:0050848">
    <property type="term" value="P:regulation of calcium-mediated signaling"/>
    <property type="evidence" value="ECO:0007669"/>
    <property type="project" value="Ensembl"/>
</dbReference>
<dbReference type="GO" id="GO:0006111">
    <property type="term" value="P:regulation of gluconeogenesis"/>
    <property type="evidence" value="ECO:0000250"/>
    <property type="project" value="UniProtKB"/>
</dbReference>
<dbReference type="GO" id="GO:0010906">
    <property type="term" value="P:regulation of glucose metabolic process"/>
    <property type="evidence" value="ECO:0000250"/>
    <property type="project" value="UniProtKB"/>
</dbReference>
<dbReference type="GO" id="GO:0010565">
    <property type="term" value="P:regulation of ketone metabolic process"/>
    <property type="evidence" value="ECO:0000250"/>
    <property type="project" value="UniProtKB"/>
</dbReference>
<dbReference type="GO" id="GO:0006885">
    <property type="term" value="P:regulation of pH"/>
    <property type="evidence" value="ECO:0000250"/>
    <property type="project" value="UniProtKB"/>
</dbReference>
<dbReference type="CDD" id="cd16929">
    <property type="entry name" value="HATPase_PDK-like"/>
    <property type="match status" value="1"/>
</dbReference>
<dbReference type="FunFam" id="1.20.140.20:FF:000001">
    <property type="entry name" value="[Pyruvate dehydrogenase (acetyl-transferring)] kinase isozyme 2, mitochondrial"/>
    <property type="match status" value="1"/>
</dbReference>
<dbReference type="FunFam" id="3.30.565.10:FF:000007">
    <property type="entry name" value="Mitochondrial pyruvate dehydrogenase kinase isoform 2"/>
    <property type="match status" value="1"/>
</dbReference>
<dbReference type="Gene3D" id="1.20.140.20">
    <property type="entry name" value="Alpha-ketoacid/pyruvate dehydrogenase kinase, N-terminal domain"/>
    <property type="match status" value="1"/>
</dbReference>
<dbReference type="Gene3D" id="3.30.565.10">
    <property type="entry name" value="Histidine kinase-like ATPase, C-terminal domain"/>
    <property type="match status" value="1"/>
</dbReference>
<dbReference type="InterPro" id="IPR036784">
    <property type="entry name" value="AK/P_DHK_N_sf"/>
</dbReference>
<dbReference type="InterPro" id="IPR018955">
    <property type="entry name" value="BCDHK/PDK_N"/>
</dbReference>
<dbReference type="InterPro" id="IPR039028">
    <property type="entry name" value="BCKD/PDK"/>
</dbReference>
<dbReference type="InterPro" id="IPR036890">
    <property type="entry name" value="HATPase_C_sf"/>
</dbReference>
<dbReference type="InterPro" id="IPR005467">
    <property type="entry name" value="His_kinase_dom"/>
</dbReference>
<dbReference type="PANTHER" id="PTHR11947:SF15">
    <property type="entry name" value="[PYRUVATE DEHYDROGENASE (ACETYL-TRANSFERRING)] KINASE ISOZYME 2, MITOCHONDRIAL"/>
    <property type="match status" value="1"/>
</dbReference>
<dbReference type="PANTHER" id="PTHR11947">
    <property type="entry name" value="PYRUVATE DEHYDROGENASE KINASE"/>
    <property type="match status" value="1"/>
</dbReference>
<dbReference type="Pfam" id="PF10436">
    <property type="entry name" value="BCDHK_Adom3"/>
    <property type="match status" value="1"/>
</dbReference>
<dbReference type="Pfam" id="PF02518">
    <property type="entry name" value="HATPase_c"/>
    <property type="match status" value="1"/>
</dbReference>
<dbReference type="SMART" id="SM00387">
    <property type="entry name" value="HATPase_c"/>
    <property type="match status" value="1"/>
</dbReference>
<dbReference type="SUPFAM" id="SSF69012">
    <property type="entry name" value="alpha-ketoacid dehydrogenase kinase, N-terminal domain"/>
    <property type="match status" value="1"/>
</dbReference>
<dbReference type="SUPFAM" id="SSF55874">
    <property type="entry name" value="ATPase domain of HSP90 chaperone/DNA topoisomerase II/histidine kinase"/>
    <property type="match status" value="1"/>
</dbReference>
<dbReference type="PROSITE" id="PS50109">
    <property type="entry name" value="HIS_KIN"/>
    <property type="match status" value="1"/>
</dbReference>
<reference key="1">
    <citation type="journal article" date="1995" name="J. Biol. Chem.">
        <title>Diversity of the pyruvate dehydrogenase kinase gene family in humans.</title>
        <authorList>
            <person name="Gudi R."/>
            <person name="Bowker-Kinley M.M."/>
            <person name="Kedishvili N.Y."/>
            <person name="Zhao Y."/>
            <person name="Popov K.M."/>
        </authorList>
    </citation>
    <scope>NUCLEOTIDE SEQUENCE [MRNA] (ISOFORM 1)</scope>
    <scope>FUNCTION</scope>
    <scope>CATALYTIC ACTIVITY</scope>
    <scope>TISSUE SPECIFICITY</scope>
    <source>
        <tissue>Liver</tissue>
    </source>
</reference>
<reference key="2">
    <citation type="journal article" date="2004" name="Nat. Genet.">
        <title>Complete sequencing and characterization of 21,243 full-length human cDNAs.</title>
        <authorList>
            <person name="Ota T."/>
            <person name="Suzuki Y."/>
            <person name="Nishikawa T."/>
            <person name="Otsuki T."/>
            <person name="Sugiyama T."/>
            <person name="Irie R."/>
            <person name="Wakamatsu A."/>
            <person name="Hayashi K."/>
            <person name="Sato H."/>
            <person name="Nagai K."/>
            <person name="Kimura K."/>
            <person name="Makita H."/>
            <person name="Sekine M."/>
            <person name="Obayashi M."/>
            <person name="Nishi T."/>
            <person name="Shibahara T."/>
            <person name="Tanaka T."/>
            <person name="Ishii S."/>
            <person name="Yamamoto J."/>
            <person name="Saito K."/>
            <person name="Kawai Y."/>
            <person name="Isono Y."/>
            <person name="Nakamura Y."/>
            <person name="Nagahari K."/>
            <person name="Murakami K."/>
            <person name="Yasuda T."/>
            <person name="Iwayanagi T."/>
            <person name="Wagatsuma M."/>
            <person name="Shiratori A."/>
            <person name="Sudo H."/>
            <person name="Hosoiri T."/>
            <person name="Kaku Y."/>
            <person name="Kodaira H."/>
            <person name="Kondo H."/>
            <person name="Sugawara M."/>
            <person name="Takahashi M."/>
            <person name="Kanda K."/>
            <person name="Yokoi T."/>
            <person name="Furuya T."/>
            <person name="Kikkawa E."/>
            <person name="Omura Y."/>
            <person name="Abe K."/>
            <person name="Kamihara K."/>
            <person name="Katsuta N."/>
            <person name="Sato K."/>
            <person name="Tanikawa M."/>
            <person name="Yamazaki M."/>
            <person name="Ninomiya K."/>
            <person name="Ishibashi T."/>
            <person name="Yamashita H."/>
            <person name="Murakawa K."/>
            <person name="Fujimori K."/>
            <person name="Tanai H."/>
            <person name="Kimata M."/>
            <person name="Watanabe M."/>
            <person name="Hiraoka S."/>
            <person name="Chiba Y."/>
            <person name="Ishida S."/>
            <person name="Ono Y."/>
            <person name="Takiguchi S."/>
            <person name="Watanabe S."/>
            <person name="Yosida M."/>
            <person name="Hotuta T."/>
            <person name="Kusano J."/>
            <person name="Kanehori K."/>
            <person name="Takahashi-Fujii A."/>
            <person name="Hara H."/>
            <person name="Tanase T.-O."/>
            <person name="Nomura Y."/>
            <person name="Togiya S."/>
            <person name="Komai F."/>
            <person name="Hara R."/>
            <person name="Takeuchi K."/>
            <person name="Arita M."/>
            <person name="Imose N."/>
            <person name="Musashino K."/>
            <person name="Yuuki H."/>
            <person name="Oshima A."/>
            <person name="Sasaki N."/>
            <person name="Aotsuka S."/>
            <person name="Yoshikawa Y."/>
            <person name="Matsunawa H."/>
            <person name="Ichihara T."/>
            <person name="Shiohata N."/>
            <person name="Sano S."/>
            <person name="Moriya S."/>
            <person name="Momiyama H."/>
            <person name="Satoh N."/>
            <person name="Takami S."/>
            <person name="Terashima Y."/>
            <person name="Suzuki O."/>
            <person name="Nakagawa S."/>
            <person name="Senoh A."/>
            <person name="Mizoguchi H."/>
            <person name="Goto Y."/>
            <person name="Shimizu F."/>
            <person name="Wakebe H."/>
            <person name="Hishigaki H."/>
            <person name="Watanabe T."/>
            <person name="Sugiyama A."/>
            <person name="Takemoto M."/>
            <person name="Kawakami B."/>
            <person name="Yamazaki M."/>
            <person name="Watanabe K."/>
            <person name="Kumagai A."/>
            <person name="Itakura S."/>
            <person name="Fukuzumi Y."/>
            <person name="Fujimori Y."/>
            <person name="Komiyama M."/>
            <person name="Tashiro H."/>
            <person name="Tanigami A."/>
            <person name="Fujiwara T."/>
            <person name="Ono T."/>
            <person name="Yamada K."/>
            <person name="Fujii Y."/>
            <person name="Ozaki K."/>
            <person name="Hirao M."/>
            <person name="Ohmori Y."/>
            <person name="Kawabata A."/>
            <person name="Hikiji T."/>
            <person name="Kobatake N."/>
            <person name="Inagaki H."/>
            <person name="Ikema Y."/>
            <person name="Okamoto S."/>
            <person name="Okitani R."/>
            <person name="Kawakami T."/>
            <person name="Noguchi S."/>
            <person name="Itoh T."/>
            <person name="Shigeta K."/>
            <person name="Senba T."/>
            <person name="Matsumura K."/>
            <person name="Nakajima Y."/>
            <person name="Mizuno T."/>
            <person name="Morinaga M."/>
            <person name="Sasaki M."/>
            <person name="Togashi T."/>
            <person name="Oyama M."/>
            <person name="Hata H."/>
            <person name="Watanabe M."/>
            <person name="Komatsu T."/>
            <person name="Mizushima-Sugano J."/>
            <person name="Satoh T."/>
            <person name="Shirai Y."/>
            <person name="Takahashi Y."/>
            <person name="Nakagawa K."/>
            <person name="Okumura K."/>
            <person name="Nagase T."/>
            <person name="Nomura N."/>
            <person name="Kikuchi H."/>
            <person name="Masuho Y."/>
            <person name="Yamashita R."/>
            <person name="Nakai K."/>
            <person name="Yada T."/>
            <person name="Nakamura Y."/>
            <person name="Ohara O."/>
            <person name="Isogai T."/>
            <person name="Sugano S."/>
        </authorList>
    </citation>
    <scope>NUCLEOTIDE SEQUENCE [LARGE SCALE MRNA] (ISOFORMS 1 AND 2)</scope>
    <source>
        <tissue>Brain</tissue>
    </source>
</reference>
<reference key="3">
    <citation type="journal article" date="2006" name="Nature">
        <title>DNA sequence of human chromosome 17 and analysis of rearrangement in the human lineage.</title>
        <authorList>
            <person name="Zody M.C."/>
            <person name="Garber M."/>
            <person name="Adams D.J."/>
            <person name="Sharpe T."/>
            <person name="Harrow J."/>
            <person name="Lupski J.R."/>
            <person name="Nicholson C."/>
            <person name="Searle S.M."/>
            <person name="Wilming L."/>
            <person name="Young S.K."/>
            <person name="Abouelleil A."/>
            <person name="Allen N.R."/>
            <person name="Bi W."/>
            <person name="Bloom T."/>
            <person name="Borowsky M.L."/>
            <person name="Bugalter B.E."/>
            <person name="Butler J."/>
            <person name="Chang J.L."/>
            <person name="Chen C.-K."/>
            <person name="Cook A."/>
            <person name="Corum B."/>
            <person name="Cuomo C.A."/>
            <person name="de Jong P.J."/>
            <person name="DeCaprio D."/>
            <person name="Dewar K."/>
            <person name="FitzGerald M."/>
            <person name="Gilbert J."/>
            <person name="Gibson R."/>
            <person name="Gnerre S."/>
            <person name="Goldstein S."/>
            <person name="Grafham D.V."/>
            <person name="Grocock R."/>
            <person name="Hafez N."/>
            <person name="Hagopian D.S."/>
            <person name="Hart E."/>
            <person name="Norman C.H."/>
            <person name="Humphray S."/>
            <person name="Jaffe D.B."/>
            <person name="Jones M."/>
            <person name="Kamal M."/>
            <person name="Khodiyar V.K."/>
            <person name="LaButti K."/>
            <person name="Laird G."/>
            <person name="Lehoczky J."/>
            <person name="Liu X."/>
            <person name="Lokyitsang T."/>
            <person name="Loveland J."/>
            <person name="Lui A."/>
            <person name="Macdonald P."/>
            <person name="Major J.E."/>
            <person name="Matthews L."/>
            <person name="Mauceli E."/>
            <person name="McCarroll S.A."/>
            <person name="Mihalev A.H."/>
            <person name="Mudge J."/>
            <person name="Nguyen C."/>
            <person name="Nicol R."/>
            <person name="O'Leary S.B."/>
            <person name="Osoegawa K."/>
            <person name="Schwartz D.C."/>
            <person name="Shaw-Smith C."/>
            <person name="Stankiewicz P."/>
            <person name="Steward C."/>
            <person name="Swarbreck D."/>
            <person name="Venkataraman V."/>
            <person name="Whittaker C.A."/>
            <person name="Yang X."/>
            <person name="Zimmer A.R."/>
            <person name="Bradley A."/>
            <person name="Hubbard T."/>
            <person name="Birren B.W."/>
            <person name="Rogers J."/>
            <person name="Lander E.S."/>
            <person name="Nusbaum C."/>
        </authorList>
    </citation>
    <scope>NUCLEOTIDE SEQUENCE [LARGE SCALE GENOMIC DNA]</scope>
</reference>
<reference key="4">
    <citation type="submission" date="2005-09" db="EMBL/GenBank/DDBJ databases">
        <authorList>
            <person name="Mural R.J."/>
            <person name="Istrail S."/>
            <person name="Sutton G.G."/>
            <person name="Florea L."/>
            <person name="Halpern A.L."/>
            <person name="Mobarry C.M."/>
            <person name="Lippert R."/>
            <person name="Walenz B."/>
            <person name="Shatkay H."/>
            <person name="Dew I."/>
            <person name="Miller J.R."/>
            <person name="Flanigan M.J."/>
            <person name="Edwards N.J."/>
            <person name="Bolanos R."/>
            <person name="Fasulo D."/>
            <person name="Halldorsson B.V."/>
            <person name="Hannenhalli S."/>
            <person name="Turner R."/>
            <person name="Yooseph S."/>
            <person name="Lu F."/>
            <person name="Nusskern D.R."/>
            <person name="Shue B.C."/>
            <person name="Zheng X.H."/>
            <person name="Zhong F."/>
            <person name="Delcher A.L."/>
            <person name="Huson D.H."/>
            <person name="Kravitz S.A."/>
            <person name="Mouchard L."/>
            <person name="Reinert K."/>
            <person name="Remington K.A."/>
            <person name="Clark A.G."/>
            <person name="Waterman M.S."/>
            <person name="Eichler E.E."/>
            <person name="Adams M.D."/>
            <person name="Hunkapiller M.W."/>
            <person name="Myers E.W."/>
            <person name="Venter J.C."/>
        </authorList>
    </citation>
    <scope>NUCLEOTIDE SEQUENCE [LARGE SCALE GENOMIC DNA]</scope>
</reference>
<reference key="5">
    <citation type="journal article" date="2004" name="Genome Res.">
        <title>The status, quality, and expansion of the NIH full-length cDNA project: the Mammalian Gene Collection (MGC).</title>
        <authorList>
            <consortium name="The MGC Project Team"/>
        </authorList>
    </citation>
    <scope>NUCLEOTIDE SEQUENCE [LARGE SCALE MRNA] (ISOFORM 1)</scope>
    <scope>VARIANT ARG-342</scope>
    <source>
        <tissue>Lung</tissue>
        <tissue>Prostate</tissue>
        <tissue>Skin</tissue>
    </source>
</reference>
<reference key="6">
    <citation type="journal article" date="1998" name="Mol. Genet. Metab.">
        <title>Insulin downregulates pyruvate dehydrogenase kinase (PDK) mRNA: potential mechanism contributing to increased lipid oxidation in insulin-resistant subjects.</title>
        <authorList>
            <person name="Majer M."/>
            <person name="Popov K.M."/>
            <person name="Harris R.A."/>
            <person name="Bogardus C."/>
            <person name="Prochazka M."/>
        </authorList>
    </citation>
    <scope>INDUCTION BY INSULIN</scope>
    <scope>FUNCTION</scope>
</reference>
<reference key="7">
    <citation type="journal article" date="2003" name="J. Biol. Chem.">
        <title>Facilitated interaction between the pyruvate dehydrogenase kinase isoform 2 and the dihydrolipoyl acetyltransferase.</title>
        <authorList>
            <person name="Hiromasa Y."/>
            <person name="Roche T.E."/>
        </authorList>
    </citation>
    <scope>SUBUNIT</scope>
    <scope>INTERACTION WITH DLAT</scope>
</reference>
<reference key="8">
    <citation type="journal article" date="2004" name="Biochemistry">
        <title>Pyruvate dehydrogenase kinase isoform 2 activity limited and further inhibited by slowing down the rate of dissociation of ADP.</title>
        <authorList>
            <person name="Bao H."/>
            <person name="Kasten S.A."/>
            <person name="Yan X."/>
            <person name="Roche T.E."/>
        </authorList>
    </citation>
    <scope>CATALYTIC ACTIVITY</scope>
    <scope>SUBUNIT</scope>
    <scope>ACTIVITY REGULATION</scope>
</reference>
<reference key="9">
    <citation type="journal article" date="2006" name="J. Biol. Chem.">
        <title>Ligand-induced effects on pyruvate dehydrogenase kinase isoform 2.</title>
        <authorList>
            <person name="Hiromasa Y."/>
            <person name="Hu L."/>
            <person name="Roche T.E."/>
        </authorList>
    </citation>
    <scope>CATALYTIC ACTIVITY</scope>
    <scope>INTERACTION WITH DLAT</scope>
    <scope>SUBUNIT</scope>
    <scope>ACTIVITY REGULATION</scope>
</reference>
<reference key="10">
    <citation type="journal article" date="2007" name="Cancer Cell">
        <title>A mitochondria-K+ channel axis is suppressed in cancer and its normalization promotes apoptosis and inhibits cancer growth.</title>
        <authorList>
            <person name="Bonnet S."/>
            <person name="Archer S.L."/>
            <person name="Allalunis-Turner J."/>
            <person name="Haromy A."/>
            <person name="Beaulieu C."/>
            <person name="Thompson R."/>
            <person name="Lee C.T."/>
            <person name="Lopaschuk G.D."/>
            <person name="Puttagunta L."/>
            <person name="Bonnet S."/>
            <person name="Harry G."/>
            <person name="Hashimoto K."/>
            <person name="Porter C.J."/>
            <person name="Andrade M.A."/>
            <person name="Thebaud B."/>
            <person name="Michelakis E.D."/>
        </authorList>
    </citation>
    <scope>FUNCTION</scope>
</reference>
<reference key="11">
    <citation type="journal article" date="2007" name="J. Mol. Biol.">
        <title>Three members of the human pyruvate dehydrogenase kinase gene family are direct targets of the peroxisome proliferator-activated receptor beta/delta.</title>
        <authorList>
            <person name="Degenhardt T."/>
            <person name="Saramaki A."/>
            <person name="Malinen M."/>
            <person name="Rieck M."/>
            <person name="Vaisanen S."/>
            <person name="Huotari A."/>
            <person name="Herzig K.H."/>
            <person name="Muller R."/>
            <person name="Carlberg C."/>
        </authorList>
    </citation>
    <scope>INDUCTION BY PPARD</scope>
</reference>
<reference key="12">
    <citation type="journal article" date="2009" name="J. Biol. Chem.">
        <title>Pivotal role of the C-terminal DW-motif in mediating inhibition of pyruvate dehydrogenase kinase 2 by dichloroacetate.</title>
        <authorList>
            <person name="Li J."/>
            <person name="Kato M."/>
            <person name="Chuang D.T."/>
        </authorList>
    </citation>
    <scope>CATALYTIC ACTIVITY</scope>
    <scope>FUNCTION</scope>
    <scope>ACTIVITY REGULATION</scope>
    <scope>INTERACTION WITH DLAT</scope>
    <scope>SUBUNIT</scope>
</reference>
<reference key="13">
    <citation type="journal article" date="2011" name="PLoS ONE">
        <title>Chronic CSE treatment induces the growth of normal oral keratinocytes via PDK2 upregulation, increased glycolysis and HIF1alpha stabilization.</title>
        <authorList>
            <person name="Sun W."/>
            <person name="Chang S.S."/>
            <person name="Fu Y."/>
            <person name="Liu Y."/>
            <person name="Califano J.A."/>
        </authorList>
    </citation>
    <scope>FUNCTION</scope>
    <scope>INDUCTION BY CIGARETTE SMOKE EXTRACT AND REACTIVE OXYGEN SPECIES</scope>
</reference>
<reference key="14">
    <citation type="journal article" date="2012" name="Cancer Res.">
        <title>p53 negatively regulates transcription of the pyruvate dehydrogenase kinase Pdk2.</title>
        <authorList>
            <person name="Contractor T."/>
            <person name="Harris C.R."/>
        </authorList>
    </citation>
    <scope>FUNCTION</scope>
</reference>
<reference key="15">
    <citation type="journal article" date="2014" name="J. Proteomics">
        <title>An enzyme assisted RP-RPLC approach for in-depth analysis of human liver phosphoproteome.</title>
        <authorList>
            <person name="Bian Y."/>
            <person name="Song C."/>
            <person name="Cheng K."/>
            <person name="Dong M."/>
            <person name="Wang F."/>
            <person name="Huang J."/>
            <person name="Sun D."/>
            <person name="Wang L."/>
            <person name="Ye M."/>
            <person name="Zou H."/>
        </authorList>
    </citation>
    <scope>IDENTIFICATION BY MASS SPECTROMETRY [LARGE SCALE ANALYSIS]</scope>
    <source>
        <tissue>Liver</tissue>
    </source>
</reference>
<reference key="16">
    <citation type="journal article" date="2006" name="Biochemistry">
        <title>Regulatory roles of the N-terminal domain based on crystal structures of human pyruvate dehydrogenase kinase 2 containing physiological and synthetic ligands.</title>
        <authorList>
            <person name="Knoechel T.R."/>
            <person name="Tucker A.D."/>
            <person name="Robinson C.M."/>
            <person name="Phillips C."/>
            <person name="Taylor W."/>
            <person name="Bungay P.J."/>
            <person name="Kasten S.A."/>
            <person name="Roche T.E."/>
            <person name="Brown D.G."/>
        </authorList>
    </citation>
    <scope>X-RAY CRYSTALLOGRAPHY (2.2 ANGSTROMS) OF 16-407 IN COMPLEX WITH ATP AND THE INHIBITORS AZD7545; NOV3R; PFZ3 AND DICHLOROACETATE</scope>
</reference>
<reference key="17">
    <citation type="journal article" date="2007" name="Nature">
        <title>Patterns of somatic mutation in human cancer genomes.</title>
        <authorList>
            <person name="Greenman C."/>
            <person name="Stephens P."/>
            <person name="Smith R."/>
            <person name="Dalgliesh G.L."/>
            <person name="Hunter C."/>
            <person name="Bignell G."/>
            <person name="Davies H."/>
            <person name="Teague J."/>
            <person name="Butler A."/>
            <person name="Stevens C."/>
            <person name="Edkins S."/>
            <person name="O'Meara S."/>
            <person name="Vastrik I."/>
            <person name="Schmidt E.E."/>
            <person name="Avis T."/>
            <person name="Barthorpe S."/>
            <person name="Bhamra G."/>
            <person name="Buck G."/>
            <person name="Choudhury B."/>
            <person name="Clements J."/>
            <person name="Cole J."/>
            <person name="Dicks E."/>
            <person name="Forbes S."/>
            <person name="Gray K."/>
            <person name="Halliday K."/>
            <person name="Harrison R."/>
            <person name="Hills K."/>
            <person name="Hinton J."/>
            <person name="Jenkinson A."/>
            <person name="Jones D."/>
            <person name="Menzies A."/>
            <person name="Mironenko T."/>
            <person name="Perry J."/>
            <person name="Raine K."/>
            <person name="Richardson D."/>
            <person name="Shepherd R."/>
            <person name="Small A."/>
            <person name="Tofts C."/>
            <person name="Varian J."/>
            <person name="Webb T."/>
            <person name="West S."/>
            <person name="Widaa S."/>
            <person name="Yates A."/>
            <person name="Cahill D.P."/>
            <person name="Louis D.N."/>
            <person name="Goldstraw P."/>
            <person name="Nicholson A.G."/>
            <person name="Brasseur F."/>
            <person name="Looijenga L."/>
            <person name="Weber B.L."/>
            <person name="Chiew Y.-E."/>
            <person name="DeFazio A."/>
            <person name="Greaves M.F."/>
            <person name="Green A.R."/>
            <person name="Campbell P."/>
            <person name="Birney E."/>
            <person name="Easton D.F."/>
            <person name="Chenevix-Trench G."/>
            <person name="Tan M.-H."/>
            <person name="Khoo S.K."/>
            <person name="Teh B.T."/>
            <person name="Yuen S.T."/>
            <person name="Leung S.Y."/>
            <person name="Wooster R."/>
            <person name="Futreal P.A."/>
            <person name="Stratton M.R."/>
        </authorList>
    </citation>
    <scope>VARIANT [LARGE SCALE ANALYSIS] ARG-342</scope>
</reference>
<accession>Q15119</accession>
<accession>A8K3A7</accession>
<accession>B3KNW0</accession>
<accession>Q6P515</accession>
<accession>Q9BS05</accession>
<gene>
    <name type="primary">PDK2</name>
    <name type="synonym">PDHK2</name>
</gene>
<protein>
    <recommendedName>
        <fullName>[Pyruvate dehydrogenase (acetyl-transferring)] kinase isozyme 2, mitochondrial</fullName>
        <ecNumber>2.7.11.2</ecNumber>
    </recommendedName>
    <alternativeName>
        <fullName>Pyruvate dehydrogenase kinase isoform 2</fullName>
        <shortName>PDH kinase 2</shortName>
        <shortName>PDKII</shortName>
    </alternativeName>
</protein>
<name>PDK2_HUMAN</name>
<comment type="function">
    <text evidence="11 14 15 16 17 18">Kinase that plays a key role in the regulation of glucose and fatty acid metabolism and homeostasis via phosphorylation of the pyruvate dehydrogenase subunits PDHA1 and PDHA2. This inhibits pyruvate dehydrogenase activity, and thereby regulates metabolite flux through the tricarboxylic acid cycle, down-regulates aerobic respiration and inhibits the formation of acetyl-coenzyme A from pyruvate. Inhibition of pyruvate dehydrogenase decreases glucose utilization and increases fat metabolism. Mediates cellular responses to insulin. Plays an important role in maintaining normal blood glucose levels and in metabolic adaptation to nutrient availability. Via its regulation of pyruvate dehydrogenase activity, plays an important role in maintaining normal blood pH and in preventing the accumulation of ketone bodies under starvation. Plays a role in the regulation of cell proliferation and in resistance to apoptosis under oxidative stress. Plays a role in p53/TP53-mediated apoptosis.</text>
</comment>
<comment type="catalytic activity">
    <reaction evidence="8 10 14 17">
        <text>L-seryl-[pyruvate dehydrogenase E1 alpha subunit] + ATP = O-phospho-L-seryl-[pyruvate dehydrogenase E1 alpha subunit] + ADP + H(+)</text>
        <dbReference type="Rhea" id="RHEA:23052"/>
        <dbReference type="Rhea" id="RHEA-COMP:13689"/>
        <dbReference type="Rhea" id="RHEA-COMP:13690"/>
        <dbReference type="ChEBI" id="CHEBI:15378"/>
        <dbReference type="ChEBI" id="CHEBI:29999"/>
        <dbReference type="ChEBI" id="CHEBI:30616"/>
        <dbReference type="ChEBI" id="CHEBI:83421"/>
        <dbReference type="ChEBI" id="CHEBI:456216"/>
        <dbReference type="EC" id="2.7.11.2"/>
    </reaction>
</comment>
<comment type="activity regulation">
    <text evidence="8 10 14">Activity is enhanced by binding to the pyruvate dehydrogenase subunit DLAT. Inhibited by ADP and pyruvate; these compounds interfere with DLAT binding and thereby inhibit kinase activity. Inhibited by dichloroacetate. Inhibited by AZD7545; this compound interferes with DLAT binding and thereby inhibits kinase activity.</text>
</comment>
<comment type="subunit">
    <text evidence="6 8 9 10 14">Homodimer, and heterodimer with PDK1. Interacts with the pyruvate dehydrogenase complex subunit DLAT, and is part of the multimeric pyruvate dehydrogenase complex that contains multiple copies of pyruvate dehydrogenase (E1), dihydrolipoamide acetyltransferase (DLAT, E2) and lipoamide dehydrogenase (DLD, E3).</text>
</comment>
<comment type="interaction">
    <interactant intactId="EBI-726271">
        <id>Q15119</id>
    </interactant>
    <interactant intactId="EBI-466029">
        <id>P42858</id>
        <label>HTT</label>
    </interactant>
    <organismsDiffer>false</organismsDiffer>
    <experiments>10</experiments>
</comment>
<comment type="subcellular location">
    <subcellularLocation>
        <location>Mitochondrion matrix</location>
    </subcellularLocation>
</comment>
<comment type="alternative products">
    <event type="alternative splicing"/>
    <isoform>
        <id>Q15119-1</id>
        <name>1</name>
        <sequence type="displayed"/>
    </isoform>
    <isoform>
        <id>Q15119-2</id>
        <name>2</name>
        <sequence type="described" ref="VSP_042549"/>
    </isoform>
</comment>
<comment type="tissue specificity">
    <text evidence="17">Expressed in many tissues, with the highest level in heart and skeletal muscle, intermediate levels in brain, kidney, pancreas and liver, and low levels in placenta and lung.</text>
</comment>
<comment type="induction">
    <text evidence="13 15 18">Down-regulated by insulin. Up-regulated by reactive oxygen species and cigarette smoke extract. Up-regulated by PPARD.</text>
</comment>
<comment type="similarity">
    <text evidence="20">Belongs to the PDK/BCKDK protein kinase family.</text>
</comment>
<feature type="transit peptide" description="Mitochondrion" evidence="4">
    <location>
        <begin position="1"/>
        <end status="unknown"/>
    </location>
</feature>
<feature type="chain" id="PRO_0000023440" description="[Pyruvate dehydrogenase (acetyl-transferring)] kinase isozyme 2, mitochondrial">
    <location>
        <begin status="unknown"/>
        <end position="407"/>
    </location>
</feature>
<feature type="domain" description="Histidine kinase" evidence="5">
    <location>
        <begin position="135"/>
        <end position="364"/>
    </location>
</feature>
<feature type="binding site" evidence="9">
    <location>
        <begin position="251"/>
        <end position="258"/>
    </location>
    <ligand>
        <name>ATP</name>
        <dbReference type="ChEBI" id="CHEBI:30616"/>
    </ligand>
</feature>
<feature type="binding site" evidence="9">
    <location>
        <position position="290"/>
    </location>
    <ligand>
        <name>ATP</name>
        <dbReference type="ChEBI" id="CHEBI:30616"/>
    </ligand>
</feature>
<feature type="binding site" evidence="1">
    <location>
        <begin position="309"/>
        <end position="310"/>
    </location>
    <ligand>
        <name>ATP</name>
        <dbReference type="ChEBI" id="CHEBI:30616"/>
    </ligand>
</feature>
<feature type="binding site" evidence="9">
    <location>
        <begin position="325"/>
        <end position="330"/>
    </location>
    <ligand>
        <name>ATP</name>
        <dbReference type="ChEBI" id="CHEBI:30616"/>
    </ligand>
</feature>
<feature type="modified residue" description="Phosphotyrosine" evidence="2">
    <location>
        <position position="215"/>
    </location>
</feature>
<feature type="modified residue" description="Phosphotyrosine" evidence="2">
    <location>
        <position position="216"/>
    </location>
</feature>
<feature type="modified residue" description="N6-succinyllysine" evidence="3">
    <location>
        <position position="376"/>
    </location>
</feature>
<feature type="splice variant" id="VSP_042549" description="In isoform 2." evidence="19">
    <location>
        <begin position="1"/>
        <end position="64"/>
    </location>
</feature>
<feature type="sequence variant" id="VAR_042296" description="In a glioblastoma multiforme sample; somatic mutation; dbSNP:rs17855787." evidence="7 12">
    <original>G</original>
    <variation>R</variation>
    <location>
        <position position="342"/>
    </location>
</feature>
<feature type="sequence conflict" description="In Ref. 1; AAC42010." evidence="20" ref="1">
    <original>S</original>
    <variation>T</variation>
    <location>
        <position position="80"/>
    </location>
</feature>
<feature type="sequence conflict" description="In Ref. 1; AAC42010." evidence="20" ref="1">
    <original>S</original>
    <variation>T</variation>
    <location>
        <position position="407"/>
    </location>
</feature>
<feature type="helix" evidence="29">
    <location>
        <begin position="6"/>
        <end position="12"/>
    </location>
</feature>
<feature type="helix" evidence="24">
    <location>
        <begin position="13"/>
        <end position="15"/>
    </location>
</feature>
<feature type="helix" evidence="25">
    <location>
        <begin position="16"/>
        <end position="24"/>
    </location>
</feature>
<feature type="helix" evidence="25">
    <location>
        <begin position="33"/>
        <end position="37"/>
    </location>
</feature>
<feature type="helix" evidence="31">
    <location>
        <begin position="43"/>
        <end position="45"/>
    </location>
</feature>
<feature type="helix" evidence="25">
    <location>
        <begin position="46"/>
        <end position="68"/>
    </location>
</feature>
<feature type="helix" evidence="25">
    <location>
        <begin position="73"/>
        <end position="76"/>
    </location>
</feature>
<feature type="helix" evidence="25">
    <location>
        <begin position="79"/>
        <end position="96"/>
    </location>
</feature>
<feature type="turn" evidence="25">
    <location>
        <begin position="97"/>
        <end position="100"/>
    </location>
</feature>
<feature type="strand" evidence="26">
    <location>
        <begin position="103"/>
        <end position="105"/>
    </location>
</feature>
<feature type="helix" evidence="25">
    <location>
        <begin position="106"/>
        <end position="122"/>
    </location>
</feature>
<feature type="turn" evidence="25">
    <location>
        <begin position="123"/>
        <end position="125"/>
    </location>
</feature>
<feature type="helix" evidence="25">
    <location>
        <begin position="126"/>
        <end position="141"/>
    </location>
</feature>
<feature type="helix" evidence="25">
    <location>
        <begin position="145"/>
        <end position="175"/>
    </location>
</feature>
<feature type="strand" evidence="21">
    <location>
        <begin position="177"/>
        <end position="179"/>
    </location>
</feature>
<feature type="strand" evidence="28">
    <location>
        <begin position="186"/>
        <end position="188"/>
    </location>
</feature>
<feature type="strand" evidence="25">
    <location>
        <begin position="191"/>
        <end position="196"/>
    </location>
</feature>
<feature type="helix" evidence="25">
    <location>
        <begin position="197"/>
        <end position="216"/>
    </location>
</feature>
<feature type="strand" evidence="25">
    <location>
        <begin position="222"/>
        <end position="230"/>
    </location>
</feature>
<feature type="strand" evidence="25">
    <location>
        <begin position="237"/>
        <end position="240"/>
    </location>
</feature>
<feature type="helix" evidence="25">
    <location>
        <begin position="242"/>
        <end position="262"/>
    </location>
</feature>
<feature type="turn" evidence="25">
    <location>
        <begin position="263"/>
        <end position="266"/>
    </location>
</feature>
<feature type="strand" evidence="30">
    <location>
        <begin position="267"/>
        <end position="269"/>
    </location>
</feature>
<feature type="strand" evidence="25">
    <location>
        <begin position="273"/>
        <end position="279"/>
    </location>
</feature>
<feature type="strand" evidence="25">
    <location>
        <begin position="281"/>
        <end position="290"/>
    </location>
</feature>
<feature type="helix" evidence="25">
    <location>
        <begin position="297"/>
        <end position="299"/>
    </location>
</feature>
<feature type="helix" evidence="25">
    <location>
        <begin position="301"/>
        <end position="304"/>
    </location>
</feature>
<feature type="turn" evidence="22">
    <location>
        <begin position="306"/>
        <end position="309"/>
    </location>
</feature>
<feature type="helix" evidence="23">
    <location>
        <begin position="323"/>
        <end position="325"/>
    </location>
</feature>
<feature type="strand" evidence="27">
    <location>
        <begin position="326"/>
        <end position="328"/>
    </location>
</feature>
<feature type="helix" evidence="25">
    <location>
        <begin position="329"/>
        <end position="339"/>
    </location>
</feature>
<feature type="strand" evidence="25">
    <location>
        <begin position="343"/>
        <end position="349"/>
    </location>
</feature>
<feature type="turn" evidence="25">
    <location>
        <begin position="350"/>
        <end position="352"/>
    </location>
</feature>
<feature type="strand" evidence="25">
    <location>
        <begin position="353"/>
        <end position="363"/>
    </location>
</feature>
<feature type="turn" evidence="25">
    <location>
        <begin position="364"/>
        <end position="366"/>
    </location>
</feature>
<feature type="helix" evidence="25">
    <location>
        <begin position="376"/>
        <end position="381"/>
    </location>
</feature>